<sequence length="109" mass="13469">MKRFPLFLLFTLLTLSTVPAQADIIDDTIGNIQQAINDAYNPDRGRDYEDSRDDGWQREVSDDRRRQYDDRRRQFEDRRRQLDDRQRQLDQERRQLEDEERRMEDEYGR</sequence>
<protein>
    <recommendedName>
        <fullName>Uncharacterized protein YjdP</fullName>
    </recommendedName>
</protein>
<keyword id="KW-1185">Reference proteome</keyword>
<keyword id="KW-0732">Signal</keyword>
<gene>
    <name type="primary">yjdP</name>
    <name type="ordered locus">b4487</name>
    <name type="ordered locus">JW5890</name>
</gene>
<reference key="1">
    <citation type="journal article" date="1997" name="Science">
        <title>The complete genome sequence of Escherichia coli K-12.</title>
        <authorList>
            <person name="Blattner F.R."/>
            <person name="Plunkett G. III"/>
            <person name="Bloch C.A."/>
            <person name="Perna N.T."/>
            <person name="Burland V."/>
            <person name="Riley M."/>
            <person name="Collado-Vides J."/>
            <person name="Glasner J.D."/>
            <person name="Rode C.K."/>
            <person name="Mayhew G.F."/>
            <person name="Gregor J."/>
            <person name="Davis N.W."/>
            <person name="Kirkpatrick H.A."/>
            <person name="Goeden M.A."/>
            <person name="Rose D.J."/>
            <person name="Mau B."/>
            <person name="Shao Y."/>
        </authorList>
    </citation>
    <scope>NUCLEOTIDE SEQUENCE [LARGE SCALE GENOMIC DNA]</scope>
    <source>
        <strain>K12 / MG1655 / ATCC 47076</strain>
    </source>
</reference>
<reference key="2">
    <citation type="journal article" date="2006" name="Mol. Syst. Biol.">
        <title>Highly accurate genome sequences of Escherichia coli K-12 strains MG1655 and W3110.</title>
        <authorList>
            <person name="Hayashi K."/>
            <person name="Morooka N."/>
            <person name="Yamamoto Y."/>
            <person name="Fujita K."/>
            <person name="Isono K."/>
            <person name="Choi S."/>
            <person name="Ohtsubo E."/>
            <person name="Baba T."/>
            <person name="Wanner B.L."/>
            <person name="Mori H."/>
            <person name="Horiuchi T."/>
        </authorList>
    </citation>
    <scope>NUCLEOTIDE SEQUENCE [LARGE SCALE GENOMIC DNA]</scope>
    <source>
        <strain>K12 / W3110 / ATCC 27325 / DSM 5911</strain>
    </source>
</reference>
<reference key="3">
    <citation type="journal article" date="2006" name="Nucleic Acids Res.">
        <title>Escherichia coli K-12: a cooperatively developed annotation snapshot -- 2005.</title>
        <authorList>
            <person name="Riley M."/>
            <person name="Abe T."/>
            <person name="Arnaud M.B."/>
            <person name="Berlyn M.K.B."/>
            <person name="Blattner F.R."/>
            <person name="Chaudhuri R.R."/>
            <person name="Glasner J.D."/>
            <person name="Horiuchi T."/>
            <person name="Keseler I.M."/>
            <person name="Kosuge T."/>
            <person name="Mori H."/>
            <person name="Perna N.T."/>
            <person name="Plunkett G. III"/>
            <person name="Rudd K.E."/>
            <person name="Serres M.H."/>
            <person name="Thomas G.H."/>
            <person name="Thomson N.R."/>
            <person name="Wishart D."/>
            <person name="Wanner B.L."/>
        </authorList>
    </citation>
    <scope>IDENTIFICATION</scope>
</reference>
<accession>Q6BEX5</accession>
<accession>Q2M6L2</accession>
<evidence type="ECO:0000255" key="1"/>
<evidence type="ECO:0000256" key="2">
    <source>
        <dbReference type="SAM" id="MobiDB-lite"/>
    </source>
</evidence>
<name>YJDP_ECOLI</name>
<proteinExistence type="inferred from homology"/>
<organism>
    <name type="scientific">Escherichia coli (strain K12)</name>
    <dbReference type="NCBI Taxonomy" id="83333"/>
    <lineage>
        <taxon>Bacteria</taxon>
        <taxon>Pseudomonadati</taxon>
        <taxon>Pseudomonadota</taxon>
        <taxon>Gammaproteobacteria</taxon>
        <taxon>Enterobacterales</taxon>
        <taxon>Enterobacteriaceae</taxon>
        <taxon>Escherichia</taxon>
    </lineage>
</organism>
<feature type="signal peptide" evidence="1">
    <location>
        <begin position="1"/>
        <end position="22"/>
    </location>
</feature>
<feature type="chain" id="PRO_0000228848" description="Uncharacterized protein YjdP">
    <location>
        <begin position="23"/>
        <end position="109"/>
    </location>
</feature>
<feature type="region of interest" description="Disordered" evidence="2">
    <location>
        <begin position="39"/>
        <end position="109"/>
    </location>
</feature>
<feature type="compositionally biased region" description="Basic and acidic residues" evidence="2">
    <location>
        <begin position="41"/>
        <end position="109"/>
    </location>
</feature>
<dbReference type="EMBL" id="U00096">
    <property type="protein sequence ID" value="AAT48239.1"/>
    <property type="molecule type" value="Genomic_DNA"/>
</dbReference>
<dbReference type="EMBL" id="AP009048">
    <property type="protein sequence ID" value="BAE78094.1"/>
    <property type="molecule type" value="Genomic_DNA"/>
</dbReference>
<dbReference type="RefSeq" id="WP_000819746.1">
    <property type="nucleotide sequence ID" value="NZ_STEB01000014.1"/>
</dbReference>
<dbReference type="RefSeq" id="YP_026281.1">
    <property type="nucleotide sequence ID" value="NC_000913.3"/>
</dbReference>
<dbReference type="SMR" id="Q6BEX5"/>
<dbReference type="FunCoup" id="Q6BEX5">
    <property type="interactions" value="49"/>
</dbReference>
<dbReference type="PaxDb" id="511145-b4487"/>
<dbReference type="EnsemblBacteria" id="AAT48239">
    <property type="protein sequence ID" value="AAT48239"/>
    <property type="gene ID" value="b4487"/>
</dbReference>
<dbReference type="GeneID" id="2847754"/>
<dbReference type="GeneID" id="93777743"/>
<dbReference type="KEGG" id="ecj:JW5890"/>
<dbReference type="KEGG" id="eco:b4487"/>
<dbReference type="KEGG" id="ecoc:C3026_22115"/>
<dbReference type="PATRIC" id="fig|511145.12.peg.4219"/>
<dbReference type="eggNOG" id="ENOG5031VYC">
    <property type="taxonomic scope" value="Bacteria"/>
</dbReference>
<dbReference type="HOGENOM" id="CLU_176118_0_0_6"/>
<dbReference type="InParanoid" id="Q6BEX5"/>
<dbReference type="OMA" id="WQREVND"/>
<dbReference type="OrthoDB" id="6615226at2"/>
<dbReference type="BioCyc" id="EcoCyc:MONOMER0-1541"/>
<dbReference type="PRO" id="PR:Q6BEX5"/>
<dbReference type="Proteomes" id="UP000000625">
    <property type="component" value="Chromosome"/>
</dbReference>
<dbReference type="InterPro" id="IPR048164">
    <property type="entry name" value="YjdP-like"/>
</dbReference>
<dbReference type="NCBIfam" id="NF041443">
    <property type="entry name" value="DDRRRQL_YjdP"/>
    <property type="match status" value="1"/>
</dbReference>